<proteinExistence type="inferred from homology"/>
<keyword id="KW-0223">Dioxygenase</keyword>
<keyword id="KW-0408">Iron</keyword>
<keyword id="KW-0479">Metal-binding</keyword>
<keyword id="KW-0560">Oxidoreductase</keyword>
<keyword id="KW-0662">Pyridine nucleotide biosynthesis</keyword>
<name>3HAO_BURL3</name>
<dbReference type="EC" id="1.13.11.6" evidence="1"/>
<dbReference type="EMBL" id="CP000150">
    <property type="protein sequence ID" value="ABB06685.1"/>
    <property type="status" value="ALT_INIT"/>
    <property type="molecule type" value="Genomic_DNA"/>
</dbReference>
<dbReference type="RefSeq" id="WP_041492683.1">
    <property type="nucleotide sequence ID" value="NC_007509.1"/>
</dbReference>
<dbReference type="SMR" id="Q39LI1"/>
<dbReference type="GeneID" id="45092989"/>
<dbReference type="KEGG" id="bur:Bcep18194_C7641"/>
<dbReference type="PATRIC" id="fig|482957.22.peg.8257"/>
<dbReference type="HOGENOM" id="CLU_095765_0_0_4"/>
<dbReference type="UniPathway" id="UPA00253">
    <property type="reaction ID" value="UER00330"/>
</dbReference>
<dbReference type="Proteomes" id="UP000002705">
    <property type="component" value="Chromosome 3"/>
</dbReference>
<dbReference type="GO" id="GO:0000334">
    <property type="term" value="F:3-hydroxyanthranilate 3,4-dioxygenase activity"/>
    <property type="evidence" value="ECO:0007669"/>
    <property type="project" value="UniProtKB-UniRule"/>
</dbReference>
<dbReference type="GO" id="GO:0008198">
    <property type="term" value="F:ferrous iron binding"/>
    <property type="evidence" value="ECO:0007669"/>
    <property type="project" value="UniProtKB-UniRule"/>
</dbReference>
<dbReference type="GO" id="GO:0043420">
    <property type="term" value="P:anthranilate metabolic process"/>
    <property type="evidence" value="ECO:0007669"/>
    <property type="project" value="UniProtKB-UniRule"/>
</dbReference>
<dbReference type="GO" id="GO:0006569">
    <property type="term" value="P:L-tryptophan catabolic process"/>
    <property type="evidence" value="ECO:0007669"/>
    <property type="project" value="UniProtKB-UniRule"/>
</dbReference>
<dbReference type="GO" id="GO:0009435">
    <property type="term" value="P:NAD biosynthetic process"/>
    <property type="evidence" value="ECO:0007669"/>
    <property type="project" value="UniProtKB-UniPathway"/>
</dbReference>
<dbReference type="GO" id="GO:0019805">
    <property type="term" value="P:quinolinate biosynthetic process"/>
    <property type="evidence" value="ECO:0007669"/>
    <property type="project" value="UniProtKB-UniRule"/>
</dbReference>
<dbReference type="CDD" id="cd06123">
    <property type="entry name" value="cupin_HAO"/>
    <property type="match status" value="1"/>
</dbReference>
<dbReference type="Gene3D" id="2.60.120.10">
    <property type="entry name" value="Jelly Rolls"/>
    <property type="match status" value="1"/>
</dbReference>
<dbReference type="HAMAP" id="MF_00825">
    <property type="entry name" value="3_HAO"/>
    <property type="match status" value="1"/>
</dbReference>
<dbReference type="InterPro" id="IPR010329">
    <property type="entry name" value="3hydroanth_dOase"/>
</dbReference>
<dbReference type="InterPro" id="IPR014710">
    <property type="entry name" value="RmlC-like_jellyroll"/>
</dbReference>
<dbReference type="InterPro" id="IPR011051">
    <property type="entry name" value="RmlC_Cupin_sf"/>
</dbReference>
<dbReference type="NCBIfam" id="TIGR03037">
    <property type="entry name" value="anthran_nbaC"/>
    <property type="match status" value="1"/>
</dbReference>
<dbReference type="NCBIfam" id="NF009763">
    <property type="entry name" value="PRK13264.1"/>
    <property type="match status" value="1"/>
</dbReference>
<dbReference type="PANTHER" id="PTHR15497">
    <property type="entry name" value="3-HYDROXYANTHRANILATE 3,4-DIOXYGENASE"/>
    <property type="match status" value="1"/>
</dbReference>
<dbReference type="PANTHER" id="PTHR15497:SF1">
    <property type="entry name" value="3-HYDROXYANTHRANILATE 3,4-DIOXYGENASE"/>
    <property type="match status" value="1"/>
</dbReference>
<dbReference type="Pfam" id="PF06052">
    <property type="entry name" value="3-HAO"/>
    <property type="match status" value="1"/>
</dbReference>
<dbReference type="SUPFAM" id="SSF51182">
    <property type="entry name" value="RmlC-like cupins"/>
    <property type="match status" value="1"/>
</dbReference>
<feature type="chain" id="PRO_0000245474" description="3-hydroxyanthranilate 3,4-dioxygenase">
    <location>
        <begin position="1"/>
        <end position="174"/>
    </location>
</feature>
<feature type="binding site" evidence="1">
    <location>
        <position position="47"/>
    </location>
    <ligand>
        <name>O2</name>
        <dbReference type="ChEBI" id="CHEBI:15379"/>
    </ligand>
</feature>
<feature type="binding site" evidence="1">
    <location>
        <position position="51"/>
    </location>
    <ligand>
        <name>Fe cation</name>
        <dbReference type="ChEBI" id="CHEBI:24875"/>
        <label>1</label>
        <note>catalytic</note>
    </ligand>
</feature>
<feature type="binding site" evidence="1">
    <location>
        <position position="57"/>
    </location>
    <ligand>
        <name>Fe cation</name>
        <dbReference type="ChEBI" id="CHEBI:24875"/>
        <label>1</label>
        <note>catalytic</note>
    </ligand>
</feature>
<feature type="binding site" evidence="1">
    <location>
        <position position="57"/>
    </location>
    <ligand>
        <name>substrate</name>
    </ligand>
</feature>
<feature type="binding site" evidence="1">
    <location>
        <position position="95"/>
    </location>
    <ligand>
        <name>Fe cation</name>
        <dbReference type="ChEBI" id="CHEBI:24875"/>
        <label>1</label>
        <note>catalytic</note>
    </ligand>
</feature>
<feature type="binding site" evidence="1">
    <location>
        <position position="99"/>
    </location>
    <ligand>
        <name>substrate</name>
    </ligand>
</feature>
<feature type="binding site" evidence="1">
    <location>
        <position position="110"/>
    </location>
    <ligand>
        <name>substrate</name>
    </ligand>
</feature>
<feature type="binding site" evidence="1">
    <location>
        <position position="125"/>
    </location>
    <ligand>
        <name>Fe cation</name>
        <dbReference type="ChEBI" id="CHEBI:24875"/>
        <label>2</label>
    </ligand>
</feature>
<feature type="binding site" evidence="1">
    <location>
        <position position="128"/>
    </location>
    <ligand>
        <name>Fe cation</name>
        <dbReference type="ChEBI" id="CHEBI:24875"/>
        <label>2</label>
    </ligand>
</feature>
<feature type="binding site" evidence="1">
    <location>
        <position position="162"/>
    </location>
    <ligand>
        <name>Fe cation</name>
        <dbReference type="ChEBI" id="CHEBI:24875"/>
        <label>2</label>
    </ligand>
</feature>
<feature type="binding site" evidence="1">
    <location>
        <position position="165"/>
    </location>
    <ligand>
        <name>Fe cation</name>
        <dbReference type="ChEBI" id="CHEBI:24875"/>
        <label>2</label>
    </ligand>
</feature>
<protein>
    <recommendedName>
        <fullName evidence="1">3-hydroxyanthranilate 3,4-dioxygenase</fullName>
        <ecNumber evidence="1">1.13.11.6</ecNumber>
    </recommendedName>
    <alternativeName>
        <fullName evidence="1">3-hydroxyanthranilate oxygenase</fullName>
        <shortName evidence="1">3-HAO</shortName>
    </alternativeName>
    <alternativeName>
        <fullName evidence="1">3-hydroxyanthranilic acid dioxygenase</fullName>
        <shortName evidence="1">HAD</shortName>
    </alternativeName>
</protein>
<comment type="function">
    <text evidence="1">Catalyzes the oxidative ring opening of 3-hydroxyanthranilate to 2-amino-3-carboxymuconate semialdehyde, which spontaneously cyclizes to quinolinate.</text>
</comment>
<comment type="catalytic activity">
    <reaction evidence="1">
        <text>3-hydroxyanthranilate + O2 = (2Z,4Z)-2-amino-3-carboxymuconate 6-semialdehyde</text>
        <dbReference type="Rhea" id="RHEA:17953"/>
        <dbReference type="ChEBI" id="CHEBI:15379"/>
        <dbReference type="ChEBI" id="CHEBI:36559"/>
        <dbReference type="ChEBI" id="CHEBI:77612"/>
        <dbReference type="EC" id="1.13.11.6"/>
    </reaction>
</comment>
<comment type="cofactor">
    <cofactor evidence="1">
        <name>Fe(2+)</name>
        <dbReference type="ChEBI" id="CHEBI:29033"/>
    </cofactor>
    <text evidence="1">Binds 2 Fe(2+) ions per subunit.</text>
</comment>
<comment type="pathway">
    <text evidence="1">Cofactor biosynthesis; NAD(+) biosynthesis; quinolinate from L-kynurenine: step 3/3.</text>
</comment>
<comment type="subunit">
    <text evidence="1">Homodimer.</text>
</comment>
<comment type="similarity">
    <text evidence="1">Belongs to the 3-HAO family.</text>
</comment>
<comment type="sequence caution" evidence="2">
    <conflict type="erroneous initiation">
        <sequence resource="EMBL-CDS" id="ABB06685"/>
    </conflict>
</comment>
<reference key="1">
    <citation type="submission" date="2005-10" db="EMBL/GenBank/DDBJ databases">
        <title>Complete sequence of chromosome 3 of Burkholderia sp. 383.</title>
        <authorList>
            <consortium name="US DOE Joint Genome Institute"/>
            <person name="Copeland A."/>
            <person name="Lucas S."/>
            <person name="Lapidus A."/>
            <person name="Barry K."/>
            <person name="Detter J.C."/>
            <person name="Glavina T."/>
            <person name="Hammon N."/>
            <person name="Israni S."/>
            <person name="Pitluck S."/>
            <person name="Chain P."/>
            <person name="Malfatti S."/>
            <person name="Shin M."/>
            <person name="Vergez L."/>
            <person name="Schmutz J."/>
            <person name="Larimer F."/>
            <person name="Land M."/>
            <person name="Kyrpides N."/>
            <person name="Lykidis A."/>
            <person name="Richardson P."/>
        </authorList>
    </citation>
    <scope>NUCLEOTIDE SEQUENCE [LARGE SCALE GENOMIC DNA]</scope>
    <source>
        <strain>ATCC 17760 / DSM 23089 / LMG 22485 / NCIMB 9086 / R18194 / 383</strain>
    </source>
</reference>
<accession>Q39LI1</accession>
<sequence length="174" mass="20048">MLKYGTPFNFSRWIDEHAHLLKPPVGNQQVWQDSDFIVTVVGGPNHRTDYHDDPFEEFFYQLRGNAYLHLWIDGKRERVDLKEGDMFLLPPHVRHSPQRPEAGSACLVIERQRPAGVVDGFEWYCDACGHLVHRVEVQLKSIVDDLPPLFDAFYASDTLRRCAHCGHMHPGKAT</sequence>
<organism>
    <name type="scientific">Burkholderia lata (strain ATCC 17760 / DSM 23089 / LMG 22485 / NCIMB 9086 / R18194 / 383)</name>
    <dbReference type="NCBI Taxonomy" id="482957"/>
    <lineage>
        <taxon>Bacteria</taxon>
        <taxon>Pseudomonadati</taxon>
        <taxon>Pseudomonadota</taxon>
        <taxon>Betaproteobacteria</taxon>
        <taxon>Burkholderiales</taxon>
        <taxon>Burkholderiaceae</taxon>
        <taxon>Burkholderia</taxon>
        <taxon>Burkholderia cepacia complex</taxon>
    </lineage>
</organism>
<evidence type="ECO:0000255" key="1">
    <source>
        <dbReference type="HAMAP-Rule" id="MF_00825"/>
    </source>
</evidence>
<evidence type="ECO:0000305" key="2"/>
<gene>
    <name evidence="1" type="primary">nbaC</name>
    <name type="ordered locus">Bcep18194_C7641</name>
</gene>